<protein>
    <recommendedName>
        <fullName evidence="1">Asparagine--tRNA ligase</fullName>
        <ecNumber evidence="1">6.1.1.22</ecNumber>
    </recommendedName>
    <alternativeName>
        <fullName evidence="1">Asparaginyl-tRNA synthetase</fullName>
        <shortName evidence="1">AsnRS</shortName>
    </alternativeName>
</protein>
<organism>
    <name type="scientific">Shigella sonnei (strain Ss046)</name>
    <dbReference type="NCBI Taxonomy" id="300269"/>
    <lineage>
        <taxon>Bacteria</taxon>
        <taxon>Pseudomonadati</taxon>
        <taxon>Pseudomonadota</taxon>
        <taxon>Gammaproteobacteria</taxon>
        <taxon>Enterobacterales</taxon>
        <taxon>Enterobacteriaceae</taxon>
        <taxon>Shigella</taxon>
    </lineage>
</organism>
<sequence>MSVVPVADVLQGRVAVDSEVTVRGWVRTRRDSKAGISFLAVYDGSCFDPVQAVINNSLPNYNEDVLRLTTGCSVIVTGKVVASPGQGQQFEIQASKVEVAGWVEDPDTYPMAAKRHSIEYLREVAHLRPRTNLIGAVARVRHTLAQALHRFFNEQGFFWVSTPLITASDTEGAGEMFRVSTLDLENLPRNDQGKVDFDKDFFGKESFLTVSGQLNGETYACALSKIYTFGPTFRAENSNTSRHLAEFWMLEPEVAFANLNDIAGLAEAMLKYVFKAVLEERADDMKFFAERVDKDAVSRLERFIEADFAQVDYTDAVTILENCGRKFENPVYWGVDLSSEHERYLAEEHFKAPVVVKNYPKDIKAFYMRLNEDGKTVAAMDVLAPGIGEIIGGSQREERLDVLDERMLEMGLNKEDYWWYRDLRRYGTVPHSGFGLGFERLIAYVTGVQNVRDVIPFPRTPRNASF</sequence>
<keyword id="KW-0030">Aminoacyl-tRNA synthetase</keyword>
<keyword id="KW-0067">ATP-binding</keyword>
<keyword id="KW-0963">Cytoplasm</keyword>
<keyword id="KW-0436">Ligase</keyword>
<keyword id="KW-0547">Nucleotide-binding</keyword>
<keyword id="KW-0648">Protein biosynthesis</keyword>
<keyword id="KW-1185">Reference proteome</keyword>
<comment type="catalytic activity">
    <reaction evidence="1">
        <text>tRNA(Asn) + L-asparagine + ATP = L-asparaginyl-tRNA(Asn) + AMP + diphosphate + H(+)</text>
        <dbReference type="Rhea" id="RHEA:11180"/>
        <dbReference type="Rhea" id="RHEA-COMP:9659"/>
        <dbReference type="Rhea" id="RHEA-COMP:9674"/>
        <dbReference type="ChEBI" id="CHEBI:15378"/>
        <dbReference type="ChEBI" id="CHEBI:30616"/>
        <dbReference type="ChEBI" id="CHEBI:33019"/>
        <dbReference type="ChEBI" id="CHEBI:58048"/>
        <dbReference type="ChEBI" id="CHEBI:78442"/>
        <dbReference type="ChEBI" id="CHEBI:78515"/>
        <dbReference type="ChEBI" id="CHEBI:456215"/>
        <dbReference type="EC" id="6.1.1.22"/>
    </reaction>
</comment>
<comment type="subunit">
    <text evidence="1">Homodimer.</text>
</comment>
<comment type="subcellular location">
    <subcellularLocation>
        <location evidence="1">Cytoplasm</location>
    </subcellularLocation>
</comment>
<comment type="similarity">
    <text evidence="1">Belongs to the class-II aminoacyl-tRNA synthetase family.</text>
</comment>
<proteinExistence type="inferred from homology"/>
<dbReference type="EC" id="6.1.1.22" evidence="1"/>
<dbReference type="EMBL" id="CP000038">
    <property type="protein sequence ID" value="AAZ87672.1"/>
    <property type="molecule type" value="Genomic_DNA"/>
</dbReference>
<dbReference type="RefSeq" id="WP_000117881.1">
    <property type="nucleotide sequence ID" value="NC_007384.1"/>
</dbReference>
<dbReference type="SMR" id="Q3Z3J0"/>
<dbReference type="GeneID" id="93776484"/>
<dbReference type="KEGG" id="ssn:SSON_0933"/>
<dbReference type="HOGENOM" id="CLU_004553_2_0_6"/>
<dbReference type="Proteomes" id="UP000002529">
    <property type="component" value="Chromosome"/>
</dbReference>
<dbReference type="GO" id="GO:0005737">
    <property type="term" value="C:cytoplasm"/>
    <property type="evidence" value="ECO:0007669"/>
    <property type="project" value="UniProtKB-SubCell"/>
</dbReference>
<dbReference type="GO" id="GO:0004816">
    <property type="term" value="F:asparagine-tRNA ligase activity"/>
    <property type="evidence" value="ECO:0007669"/>
    <property type="project" value="UniProtKB-UniRule"/>
</dbReference>
<dbReference type="GO" id="GO:0005524">
    <property type="term" value="F:ATP binding"/>
    <property type="evidence" value="ECO:0007669"/>
    <property type="project" value="UniProtKB-UniRule"/>
</dbReference>
<dbReference type="GO" id="GO:0003676">
    <property type="term" value="F:nucleic acid binding"/>
    <property type="evidence" value="ECO:0007669"/>
    <property type="project" value="InterPro"/>
</dbReference>
<dbReference type="GO" id="GO:0006421">
    <property type="term" value="P:asparaginyl-tRNA aminoacylation"/>
    <property type="evidence" value="ECO:0007669"/>
    <property type="project" value="UniProtKB-UniRule"/>
</dbReference>
<dbReference type="CDD" id="cd00776">
    <property type="entry name" value="AsxRS_core"/>
    <property type="match status" value="1"/>
</dbReference>
<dbReference type="CDD" id="cd04318">
    <property type="entry name" value="EcAsnRS_like_N"/>
    <property type="match status" value="1"/>
</dbReference>
<dbReference type="FunFam" id="2.40.50.140:FF:000116">
    <property type="entry name" value="Asparagine--tRNA ligase"/>
    <property type="match status" value="1"/>
</dbReference>
<dbReference type="FunFam" id="3.30.930.10:FF:000016">
    <property type="entry name" value="Asparagine--tRNA ligase"/>
    <property type="match status" value="1"/>
</dbReference>
<dbReference type="Gene3D" id="3.30.930.10">
    <property type="entry name" value="Bira Bifunctional Protein, Domain 2"/>
    <property type="match status" value="1"/>
</dbReference>
<dbReference type="Gene3D" id="2.40.50.140">
    <property type="entry name" value="Nucleic acid-binding proteins"/>
    <property type="match status" value="1"/>
</dbReference>
<dbReference type="HAMAP" id="MF_00534">
    <property type="entry name" value="Asn_tRNA_synth"/>
    <property type="match status" value="1"/>
</dbReference>
<dbReference type="InterPro" id="IPR004364">
    <property type="entry name" value="Aa-tRNA-synt_II"/>
</dbReference>
<dbReference type="InterPro" id="IPR006195">
    <property type="entry name" value="aa-tRNA-synth_II"/>
</dbReference>
<dbReference type="InterPro" id="IPR045864">
    <property type="entry name" value="aa-tRNA-synth_II/BPL/LPL"/>
</dbReference>
<dbReference type="InterPro" id="IPR004522">
    <property type="entry name" value="Asn-tRNA-ligase"/>
</dbReference>
<dbReference type="InterPro" id="IPR002312">
    <property type="entry name" value="Asp/Asn-tRNA-synth_IIb"/>
</dbReference>
<dbReference type="InterPro" id="IPR012340">
    <property type="entry name" value="NA-bd_OB-fold"/>
</dbReference>
<dbReference type="InterPro" id="IPR004365">
    <property type="entry name" value="NA-bd_OB_tRNA"/>
</dbReference>
<dbReference type="NCBIfam" id="TIGR00457">
    <property type="entry name" value="asnS"/>
    <property type="match status" value="1"/>
</dbReference>
<dbReference type="NCBIfam" id="NF003037">
    <property type="entry name" value="PRK03932.1"/>
    <property type="match status" value="1"/>
</dbReference>
<dbReference type="PANTHER" id="PTHR22594:SF34">
    <property type="entry name" value="ASPARAGINE--TRNA LIGASE, MITOCHONDRIAL-RELATED"/>
    <property type="match status" value="1"/>
</dbReference>
<dbReference type="PANTHER" id="PTHR22594">
    <property type="entry name" value="ASPARTYL/LYSYL-TRNA SYNTHETASE"/>
    <property type="match status" value="1"/>
</dbReference>
<dbReference type="Pfam" id="PF00152">
    <property type="entry name" value="tRNA-synt_2"/>
    <property type="match status" value="1"/>
</dbReference>
<dbReference type="Pfam" id="PF01336">
    <property type="entry name" value="tRNA_anti-codon"/>
    <property type="match status" value="1"/>
</dbReference>
<dbReference type="PRINTS" id="PR01042">
    <property type="entry name" value="TRNASYNTHASP"/>
</dbReference>
<dbReference type="SUPFAM" id="SSF55681">
    <property type="entry name" value="Class II aaRS and biotin synthetases"/>
    <property type="match status" value="1"/>
</dbReference>
<dbReference type="SUPFAM" id="SSF50249">
    <property type="entry name" value="Nucleic acid-binding proteins"/>
    <property type="match status" value="1"/>
</dbReference>
<dbReference type="PROSITE" id="PS50862">
    <property type="entry name" value="AA_TRNA_LIGASE_II"/>
    <property type="match status" value="1"/>
</dbReference>
<gene>
    <name evidence="1" type="primary">asnS</name>
    <name type="ordered locus">SSON_0933</name>
</gene>
<name>SYN_SHISS</name>
<reference key="1">
    <citation type="journal article" date="2005" name="Nucleic Acids Res.">
        <title>Genome dynamics and diversity of Shigella species, the etiologic agents of bacillary dysentery.</title>
        <authorList>
            <person name="Yang F."/>
            <person name="Yang J."/>
            <person name="Zhang X."/>
            <person name="Chen L."/>
            <person name="Jiang Y."/>
            <person name="Yan Y."/>
            <person name="Tang X."/>
            <person name="Wang J."/>
            <person name="Xiong Z."/>
            <person name="Dong J."/>
            <person name="Xue Y."/>
            <person name="Zhu Y."/>
            <person name="Xu X."/>
            <person name="Sun L."/>
            <person name="Chen S."/>
            <person name="Nie H."/>
            <person name="Peng J."/>
            <person name="Xu J."/>
            <person name="Wang Y."/>
            <person name="Yuan Z."/>
            <person name="Wen Y."/>
            <person name="Yao Z."/>
            <person name="Shen Y."/>
            <person name="Qiang B."/>
            <person name="Hou Y."/>
            <person name="Yu J."/>
            <person name="Jin Q."/>
        </authorList>
    </citation>
    <scope>NUCLEOTIDE SEQUENCE [LARGE SCALE GENOMIC DNA]</scope>
    <source>
        <strain>Ss046</strain>
    </source>
</reference>
<evidence type="ECO:0000255" key="1">
    <source>
        <dbReference type="HAMAP-Rule" id="MF_00534"/>
    </source>
</evidence>
<feature type="chain" id="PRO_1000051433" description="Asparagine--tRNA ligase">
    <location>
        <begin position="1"/>
        <end position="466"/>
    </location>
</feature>
<accession>Q3Z3J0</accession>